<evidence type="ECO:0000255" key="1">
    <source>
        <dbReference type="HAMAP-Rule" id="MF_01703"/>
    </source>
</evidence>
<accession>P63360</accession>
<accession>Q8XFG5</accession>
<name>MSBA_SALTI</name>
<feature type="chain" id="PRO_0000092597" description="ATP-dependent lipid A-core flippase">
    <location>
        <begin position="1"/>
        <end position="582"/>
    </location>
</feature>
<feature type="transmembrane region" description="Helical" evidence="1">
    <location>
        <begin position="16"/>
        <end position="36"/>
    </location>
</feature>
<feature type="transmembrane region" description="Helical" evidence="1">
    <location>
        <begin position="64"/>
        <end position="84"/>
    </location>
</feature>
<feature type="transmembrane region" description="Helical" evidence="1">
    <location>
        <begin position="153"/>
        <end position="173"/>
    </location>
</feature>
<feature type="transmembrane region" description="Helical" evidence="1">
    <location>
        <begin position="253"/>
        <end position="273"/>
    </location>
</feature>
<feature type="transmembrane region" description="Helical" evidence="1">
    <location>
        <begin position="275"/>
        <end position="295"/>
    </location>
</feature>
<feature type="domain" description="ABC transmembrane type-1" evidence="1">
    <location>
        <begin position="28"/>
        <end position="310"/>
    </location>
</feature>
<feature type="domain" description="ABC transporter" evidence="1">
    <location>
        <begin position="342"/>
        <end position="578"/>
    </location>
</feature>
<feature type="binding site" evidence="1">
    <location>
        <begin position="376"/>
        <end position="383"/>
    </location>
    <ligand>
        <name>ATP</name>
        <dbReference type="ChEBI" id="CHEBI:30616"/>
    </ligand>
</feature>
<sequence>MHNDKDLSTWQTFRRLWPTIAPFKAGLIVAGIALILNAASDTFMLSLLKPLLDDGFGKTDRSVLLWMPLVVIGLMILRGITSYISSYCISWVSGKVVMTMRRRLFGHMMGMPVAFFDKQSTGTLLSRITYDSEQVASSSSGALITVVREGASIIGLFIMMFYYSWQLSIILVVLAPIVSIAIRVVSKRFRSISKNMQNTMGQVTTSAEQMLKGHKEVLIFGGQEVETKRFDKVSNKMRLQGMKMVSASSISDPIIQLIASLALAFVLYAASFPSVMDSLTAGTITVVFSSMIALMRPLKSLTNVNAQFQRGMAACQTLFAILDSEQEKDEGKRVIDRATGDLEFRNVTFTYPGREVPALRNINLKIPAGKTVALVGRSGSGKSTIASLITRFYDIDEGHILMDGHDLREYTLASLRNQVALVSQNVHLFNDTVANNIAYARTEEYSREQIEEAARMAYAMDFINKMDNGLDTIIGENGVLLSGGQRQRIAIARALLRDSPILILDEATSALDTESERAIQAALDELQKNRTSLVIAHRLSTIEQADEIVVVEDGIIVERGTHSELLAQHGVYAQLHKMQFGQ</sequence>
<organism>
    <name type="scientific">Salmonella typhi</name>
    <dbReference type="NCBI Taxonomy" id="90370"/>
    <lineage>
        <taxon>Bacteria</taxon>
        <taxon>Pseudomonadati</taxon>
        <taxon>Pseudomonadota</taxon>
        <taxon>Gammaproteobacteria</taxon>
        <taxon>Enterobacterales</taxon>
        <taxon>Enterobacteriaceae</taxon>
        <taxon>Salmonella</taxon>
    </lineage>
</organism>
<proteinExistence type="inferred from homology"/>
<dbReference type="EC" id="7.5.2.6" evidence="1"/>
<dbReference type="EMBL" id="AL513382">
    <property type="protein sequence ID" value="CAD05384.1"/>
    <property type="molecule type" value="Genomic_DNA"/>
</dbReference>
<dbReference type="EMBL" id="AE014613">
    <property type="protein sequence ID" value="AAO69564.1"/>
    <property type="molecule type" value="Genomic_DNA"/>
</dbReference>
<dbReference type="RefSeq" id="NP_455471.1">
    <property type="nucleotide sequence ID" value="NC_003198.1"/>
</dbReference>
<dbReference type="RefSeq" id="WP_000551246.1">
    <property type="nucleotide sequence ID" value="NZ_WSUR01000013.1"/>
</dbReference>
<dbReference type="SMR" id="P63360"/>
<dbReference type="STRING" id="220341.gene:17584975"/>
<dbReference type="KEGG" id="stt:t1950"/>
<dbReference type="KEGG" id="sty:STY0985"/>
<dbReference type="PATRIC" id="fig|220341.7.peg.993"/>
<dbReference type="eggNOG" id="COG1132">
    <property type="taxonomic scope" value="Bacteria"/>
</dbReference>
<dbReference type="HOGENOM" id="CLU_000604_84_3_6"/>
<dbReference type="OMA" id="MYTGHTL"/>
<dbReference type="OrthoDB" id="9806127at2"/>
<dbReference type="Proteomes" id="UP000000541">
    <property type="component" value="Chromosome"/>
</dbReference>
<dbReference type="Proteomes" id="UP000002670">
    <property type="component" value="Chromosome"/>
</dbReference>
<dbReference type="GO" id="GO:0005886">
    <property type="term" value="C:plasma membrane"/>
    <property type="evidence" value="ECO:0007669"/>
    <property type="project" value="UniProtKB-SubCell"/>
</dbReference>
<dbReference type="GO" id="GO:0015421">
    <property type="term" value="F:ABC-type oligopeptide transporter activity"/>
    <property type="evidence" value="ECO:0007669"/>
    <property type="project" value="TreeGrafter"/>
</dbReference>
<dbReference type="GO" id="GO:0005524">
    <property type="term" value="F:ATP binding"/>
    <property type="evidence" value="ECO:0007669"/>
    <property type="project" value="UniProtKB-KW"/>
</dbReference>
<dbReference type="GO" id="GO:0016887">
    <property type="term" value="F:ATP hydrolysis activity"/>
    <property type="evidence" value="ECO:0007669"/>
    <property type="project" value="InterPro"/>
</dbReference>
<dbReference type="GO" id="GO:0034040">
    <property type="term" value="F:ATPase-coupled lipid transmembrane transporter activity"/>
    <property type="evidence" value="ECO:0007669"/>
    <property type="project" value="InterPro"/>
</dbReference>
<dbReference type="CDD" id="cd18552">
    <property type="entry name" value="ABC_6TM_MsbA_like"/>
    <property type="match status" value="1"/>
</dbReference>
<dbReference type="CDD" id="cd03251">
    <property type="entry name" value="ABCC_MsbA"/>
    <property type="match status" value="1"/>
</dbReference>
<dbReference type="FunFam" id="1.20.1560.10:FF:000008">
    <property type="entry name" value="Lipid A export ATP-binding/permease protein MsbA"/>
    <property type="match status" value="1"/>
</dbReference>
<dbReference type="FunFam" id="3.40.50.300:FF:000140">
    <property type="entry name" value="Lipid A export ATP-binding/permease protein MsbA"/>
    <property type="match status" value="1"/>
</dbReference>
<dbReference type="Gene3D" id="1.20.1560.10">
    <property type="entry name" value="ABC transporter type 1, transmembrane domain"/>
    <property type="match status" value="1"/>
</dbReference>
<dbReference type="Gene3D" id="3.40.50.300">
    <property type="entry name" value="P-loop containing nucleotide triphosphate hydrolases"/>
    <property type="match status" value="1"/>
</dbReference>
<dbReference type="InterPro" id="IPR003593">
    <property type="entry name" value="AAA+_ATPase"/>
</dbReference>
<dbReference type="InterPro" id="IPR011527">
    <property type="entry name" value="ABC1_TM_dom"/>
</dbReference>
<dbReference type="InterPro" id="IPR036640">
    <property type="entry name" value="ABC1_TM_sf"/>
</dbReference>
<dbReference type="InterPro" id="IPR003439">
    <property type="entry name" value="ABC_transporter-like_ATP-bd"/>
</dbReference>
<dbReference type="InterPro" id="IPR017871">
    <property type="entry name" value="ABC_transporter-like_CS"/>
</dbReference>
<dbReference type="InterPro" id="IPR011917">
    <property type="entry name" value="ABC_transpr_lipidA"/>
</dbReference>
<dbReference type="InterPro" id="IPR027417">
    <property type="entry name" value="P-loop_NTPase"/>
</dbReference>
<dbReference type="InterPro" id="IPR039421">
    <property type="entry name" value="Type_1_exporter"/>
</dbReference>
<dbReference type="NCBIfam" id="TIGR02203">
    <property type="entry name" value="MsbA_lipidA"/>
    <property type="match status" value="1"/>
</dbReference>
<dbReference type="NCBIfam" id="NF008381">
    <property type="entry name" value="PRK11176.1"/>
    <property type="match status" value="1"/>
</dbReference>
<dbReference type="PANTHER" id="PTHR43394:SF1">
    <property type="entry name" value="ATP-BINDING CASSETTE SUB-FAMILY B MEMBER 10, MITOCHONDRIAL"/>
    <property type="match status" value="1"/>
</dbReference>
<dbReference type="PANTHER" id="PTHR43394">
    <property type="entry name" value="ATP-DEPENDENT PERMEASE MDL1, MITOCHONDRIAL"/>
    <property type="match status" value="1"/>
</dbReference>
<dbReference type="Pfam" id="PF00664">
    <property type="entry name" value="ABC_membrane"/>
    <property type="match status" value="1"/>
</dbReference>
<dbReference type="Pfam" id="PF00005">
    <property type="entry name" value="ABC_tran"/>
    <property type="match status" value="1"/>
</dbReference>
<dbReference type="SMART" id="SM00382">
    <property type="entry name" value="AAA"/>
    <property type="match status" value="1"/>
</dbReference>
<dbReference type="SUPFAM" id="SSF90123">
    <property type="entry name" value="ABC transporter transmembrane region"/>
    <property type="match status" value="1"/>
</dbReference>
<dbReference type="SUPFAM" id="SSF52540">
    <property type="entry name" value="P-loop containing nucleoside triphosphate hydrolases"/>
    <property type="match status" value="1"/>
</dbReference>
<dbReference type="PROSITE" id="PS50929">
    <property type="entry name" value="ABC_TM1F"/>
    <property type="match status" value="1"/>
</dbReference>
<dbReference type="PROSITE" id="PS00211">
    <property type="entry name" value="ABC_TRANSPORTER_1"/>
    <property type="match status" value="1"/>
</dbReference>
<dbReference type="PROSITE" id="PS50893">
    <property type="entry name" value="ABC_TRANSPORTER_2"/>
    <property type="match status" value="1"/>
</dbReference>
<dbReference type="PROSITE" id="PS51239">
    <property type="entry name" value="MSBA"/>
    <property type="match status" value="1"/>
</dbReference>
<keyword id="KW-0067">ATP-binding</keyword>
<keyword id="KW-0997">Cell inner membrane</keyword>
<keyword id="KW-1003">Cell membrane</keyword>
<keyword id="KW-0445">Lipid transport</keyword>
<keyword id="KW-0472">Membrane</keyword>
<keyword id="KW-0547">Nucleotide-binding</keyword>
<keyword id="KW-1278">Translocase</keyword>
<keyword id="KW-0812">Transmembrane</keyword>
<keyword id="KW-1133">Transmembrane helix</keyword>
<keyword id="KW-0813">Transport</keyword>
<reference key="1">
    <citation type="journal article" date="2001" name="Nature">
        <title>Complete genome sequence of a multiple drug resistant Salmonella enterica serovar Typhi CT18.</title>
        <authorList>
            <person name="Parkhill J."/>
            <person name="Dougan G."/>
            <person name="James K.D."/>
            <person name="Thomson N.R."/>
            <person name="Pickard D."/>
            <person name="Wain J."/>
            <person name="Churcher C.M."/>
            <person name="Mungall K.L."/>
            <person name="Bentley S.D."/>
            <person name="Holden M.T.G."/>
            <person name="Sebaihia M."/>
            <person name="Baker S."/>
            <person name="Basham D."/>
            <person name="Brooks K."/>
            <person name="Chillingworth T."/>
            <person name="Connerton P."/>
            <person name="Cronin A."/>
            <person name="Davis P."/>
            <person name="Davies R.M."/>
            <person name="Dowd L."/>
            <person name="White N."/>
            <person name="Farrar J."/>
            <person name="Feltwell T."/>
            <person name="Hamlin N."/>
            <person name="Haque A."/>
            <person name="Hien T.T."/>
            <person name="Holroyd S."/>
            <person name="Jagels K."/>
            <person name="Krogh A."/>
            <person name="Larsen T.S."/>
            <person name="Leather S."/>
            <person name="Moule S."/>
            <person name="O'Gaora P."/>
            <person name="Parry C."/>
            <person name="Quail M.A."/>
            <person name="Rutherford K.M."/>
            <person name="Simmonds M."/>
            <person name="Skelton J."/>
            <person name="Stevens K."/>
            <person name="Whitehead S."/>
            <person name="Barrell B.G."/>
        </authorList>
    </citation>
    <scope>NUCLEOTIDE SEQUENCE [LARGE SCALE GENOMIC DNA]</scope>
    <source>
        <strain>CT18</strain>
    </source>
</reference>
<reference key="2">
    <citation type="journal article" date="2003" name="J. Bacteriol.">
        <title>Comparative genomics of Salmonella enterica serovar Typhi strains Ty2 and CT18.</title>
        <authorList>
            <person name="Deng W."/>
            <person name="Liou S.-R."/>
            <person name="Plunkett G. III"/>
            <person name="Mayhew G.F."/>
            <person name="Rose D.J."/>
            <person name="Burland V."/>
            <person name="Kodoyianni V."/>
            <person name="Schwartz D.C."/>
            <person name="Blattner F.R."/>
        </authorList>
    </citation>
    <scope>NUCLEOTIDE SEQUENCE [LARGE SCALE GENOMIC DNA]</scope>
    <source>
        <strain>ATCC 700931 / Ty2</strain>
    </source>
</reference>
<gene>
    <name evidence="1" type="primary">msbA</name>
    <name type="ordered locus">STY0985</name>
    <name type="ordered locus">t1950</name>
</gene>
<protein>
    <recommendedName>
        <fullName evidence="1">ATP-dependent lipid A-core flippase</fullName>
        <ecNumber evidence="1">7.5.2.6</ecNumber>
    </recommendedName>
    <alternativeName>
        <fullName evidence="1">Lipid A export ATP-binding/permease protein MsbA</fullName>
    </alternativeName>
</protein>
<comment type="function">
    <text evidence="1">Involved in lipopolysaccharide (LPS) biosynthesis. Translocates lipid A-core from the inner to the outer leaflet of the inner membrane. Transmembrane domains (TMD) form a pore in the inner membrane and the ATP-binding domain (NBD) is responsible for energy generation.</text>
</comment>
<comment type="catalytic activity">
    <reaction evidence="1">
        <text>ATP + H2O + lipid A-core oligosaccharideSide 1 = ADP + phosphate + lipid A-core oligosaccharideSide 2.</text>
        <dbReference type="EC" id="7.5.2.6"/>
    </reaction>
</comment>
<comment type="subunit">
    <text evidence="1">Homodimer.</text>
</comment>
<comment type="subcellular location">
    <subcellularLocation>
        <location evidence="1">Cell inner membrane</location>
        <topology evidence="1">Multi-pass membrane protein</topology>
    </subcellularLocation>
</comment>
<comment type="domain">
    <text evidence="1">In MsbA the ATP-binding domain (NBD) and the transmembrane domain (TMD) are fused.</text>
</comment>
<comment type="similarity">
    <text evidence="1">Belongs to the ABC transporter superfamily. Lipid exporter (TC 3.A.1.106) family.</text>
</comment>